<protein>
    <recommendedName>
        <fullName evidence="1">Ribosome biogenesis protein WDR12 homolog</fullName>
    </recommendedName>
</protein>
<proteinExistence type="inferred from homology"/>
<dbReference type="EMBL" id="CH940649">
    <property type="protein sequence ID" value="EDW64764.1"/>
    <property type="molecule type" value="Genomic_DNA"/>
</dbReference>
<dbReference type="SMR" id="B4LS78"/>
<dbReference type="FunCoup" id="B4LS78">
    <property type="interactions" value="1772"/>
</dbReference>
<dbReference type="STRING" id="7244.B4LS78"/>
<dbReference type="EnsemblMetazoa" id="FBtr0233566">
    <property type="protein sequence ID" value="FBpp0232058"/>
    <property type="gene ID" value="FBgn0204810"/>
</dbReference>
<dbReference type="EnsemblMetazoa" id="XM_002052573.3">
    <property type="protein sequence ID" value="XP_002052609.1"/>
    <property type="gene ID" value="LOC6629233"/>
</dbReference>
<dbReference type="GeneID" id="6629233"/>
<dbReference type="KEGG" id="dvi:6629233"/>
<dbReference type="eggNOG" id="KOG0313">
    <property type="taxonomic scope" value="Eukaryota"/>
</dbReference>
<dbReference type="HOGENOM" id="CLU_000288_57_0_1"/>
<dbReference type="InParanoid" id="B4LS78"/>
<dbReference type="OMA" id="DHKYVEF"/>
<dbReference type="OrthoDB" id="10251381at2759"/>
<dbReference type="PhylomeDB" id="B4LS78"/>
<dbReference type="Proteomes" id="UP000008792">
    <property type="component" value="Unassembled WGS sequence"/>
</dbReference>
<dbReference type="GO" id="GO:0005654">
    <property type="term" value="C:nucleoplasm"/>
    <property type="evidence" value="ECO:0007669"/>
    <property type="project" value="UniProtKB-SubCell"/>
</dbReference>
<dbReference type="GO" id="GO:0070545">
    <property type="term" value="C:PeBoW complex"/>
    <property type="evidence" value="ECO:0000250"/>
    <property type="project" value="UniProtKB"/>
</dbReference>
<dbReference type="GO" id="GO:0030687">
    <property type="term" value="C:preribosome, large subunit precursor"/>
    <property type="evidence" value="ECO:0007669"/>
    <property type="project" value="UniProtKB-UniRule"/>
</dbReference>
<dbReference type="GO" id="GO:0043021">
    <property type="term" value="F:ribonucleoprotein complex binding"/>
    <property type="evidence" value="ECO:0007669"/>
    <property type="project" value="UniProtKB-UniRule"/>
</dbReference>
<dbReference type="GO" id="GO:0000466">
    <property type="term" value="P:maturation of 5.8S rRNA from tricistronic rRNA transcript (SSU-rRNA, 5.8S rRNA, LSU-rRNA)"/>
    <property type="evidence" value="ECO:0007669"/>
    <property type="project" value="UniProtKB-UniRule"/>
</dbReference>
<dbReference type="GO" id="GO:0000463">
    <property type="term" value="P:maturation of LSU-rRNA from tricistronic rRNA transcript (SSU-rRNA, 5.8S rRNA, LSU-rRNA)"/>
    <property type="evidence" value="ECO:0000250"/>
    <property type="project" value="UniProtKB"/>
</dbReference>
<dbReference type="CDD" id="cd00200">
    <property type="entry name" value="WD40"/>
    <property type="match status" value="1"/>
</dbReference>
<dbReference type="FunFam" id="2.130.10.10:FF:000878">
    <property type="entry name" value="Ribosome biogenesis protein WDR12 homolog"/>
    <property type="match status" value="1"/>
</dbReference>
<dbReference type="FunFam" id="2.130.10.10:FF:000989">
    <property type="entry name" value="Ribosome biogenesis protein WDR12 homolog"/>
    <property type="match status" value="1"/>
</dbReference>
<dbReference type="FunFam" id="2.130.10.10:FF:001205">
    <property type="entry name" value="Ribosome biogenesis protein WDR12 homolog"/>
    <property type="match status" value="1"/>
</dbReference>
<dbReference type="Gene3D" id="2.130.10.10">
    <property type="entry name" value="YVTN repeat-like/Quinoprotein amine dehydrogenase"/>
    <property type="match status" value="3"/>
</dbReference>
<dbReference type="HAMAP" id="MF_03029">
    <property type="entry name" value="WDR12"/>
    <property type="match status" value="1"/>
</dbReference>
<dbReference type="InterPro" id="IPR020472">
    <property type="entry name" value="G-protein_beta_WD-40_rep"/>
</dbReference>
<dbReference type="InterPro" id="IPR012972">
    <property type="entry name" value="NLE"/>
</dbReference>
<dbReference type="InterPro" id="IPR015943">
    <property type="entry name" value="WD40/YVTN_repeat-like_dom_sf"/>
</dbReference>
<dbReference type="InterPro" id="IPR019775">
    <property type="entry name" value="WD40_repeat_CS"/>
</dbReference>
<dbReference type="InterPro" id="IPR036322">
    <property type="entry name" value="WD40_repeat_dom_sf"/>
</dbReference>
<dbReference type="InterPro" id="IPR001680">
    <property type="entry name" value="WD40_rpt"/>
</dbReference>
<dbReference type="InterPro" id="IPR028599">
    <property type="entry name" value="WDR12/Ytm1"/>
</dbReference>
<dbReference type="PANTHER" id="PTHR19855:SF11">
    <property type="entry name" value="RIBOSOME BIOGENESIS PROTEIN WDR12"/>
    <property type="match status" value="1"/>
</dbReference>
<dbReference type="PANTHER" id="PTHR19855">
    <property type="entry name" value="WD40 REPEAT PROTEIN 12, 37"/>
    <property type="match status" value="1"/>
</dbReference>
<dbReference type="Pfam" id="PF08154">
    <property type="entry name" value="NLE"/>
    <property type="match status" value="1"/>
</dbReference>
<dbReference type="Pfam" id="PF00400">
    <property type="entry name" value="WD40"/>
    <property type="match status" value="7"/>
</dbReference>
<dbReference type="PRINTS" id="PR00320">
    <property type="entry name" value="GPROTEINBRPT"/>
</dbReference>
<dbReference type="SMART" id="SM00320">
    <property type="entry name" value="WD40"/>
    <property type="match status" value="7"/>
</dbReference>
<dbReference type="SUPFAM" id="SSF50978">
    <property type="entry name" value="WD40 repeat-like"/>
    <property type="match status" value="1"/>
</dbReference>
<dbReference type="PROSITE" id="PS00678">
    <property type="entry name" value="WD_REPEATS_1"/>
    <property type="match status" value="1"/>
</dbReference>
<dbReference type="PROSITE" id="PS50082">
    <property type="entry name" value="WD_REPEATS_2"/>
    <property type="match status" value="4"/>
</dbReference>
<dbReference type="PROSITE" id="PS50294">
    <property type="entry name" value="WD_REPEATS_REGION"/>
    <property type="match status" value="1"/>
</dbReference>
<sequence length="419" mass="46959">MEAENGEGQVQVHLKTKQEHYAVPDVPYAIDGSVSTTELNIFLNALLQSKGAEGVDFDFLVFDEYLRGRLCDHLREKAISFEDAIDIEYVERFPAPEPQDCLLHDDWVSAVKACGKWILTGCYDNTINIWTNKGKHKLTIPGHTAPIKAVDWISMDDENGRFVSTSQDQTAMLWQWNIASNAVECVSVCKGHERGVDSVCVSPDAQRFATGSWDTMLKIWSAGLDDTSEGTAKRVKESGVRTPKMTLQGHRESISAVQWMDATTLVTGSWDHTLKVWDLQLEGIKTEISTNKSIFDASYSKLNRLIVTASADKNLRLYDARTNQGSVVRNTYLGHNAWVQTVMWSNTEEFLFVSGSYDTQNKLWDCRSPKAPLYDLLGHGEKVLDIDWSNPKYIVSGGADNTVRVFKSGKATIENMETK</sequence>
<keyword id="KW-0539">Nucleus</keyword>
<keyword id="KW-1185">Reference proteome</keyword>
<keyword id="KW-0677">Repeat</keyword>
<keyword id="KW-0690">Ribosome biogenesis</keyword>
<keyword id="KW-0698">rRNA processing</keyword>
<keyword id="KW-0853">WD repeat</keyword>
<feature type="chain" id="PRO_0000369564" description="Ribosome biogenesis protein WDR12 homolog">
    <location>
        <begin position="1"/>
        <end position="419"/>
    </location>
</feature>
<feature type="repeat" description="WD 1">
    <location>
        <begin position="103"/>
        <end position="140"/>
    </location>
</feature>
<feature type="repeat" description="WD 2">
    <location>
        <begin position="142"/>
        <end position="184"/>
    </location>
</feature>
<feature type="repeat" description="WD 3">
    <location>
        <begin position="191"/>
        <end position="230"/>
    </location>
</feature>
<feature type="repeat" description="WD 4">
    <location>
        <begin position="249"/>
        <end position="287"/>
    </location>
</feature>
<feature type="repeat" description="WD 5">
    <location>
        <begin position="289"/>
        <end position="328"/>
    </location>
</feature>
<feature type="repeat" description="WD 6">
    <location>
        <begin position="334"/>
        <end position="374"/>
    </location>
</feature>
<feature type="repeat" description="WD 7">
    <location>
        <begin position="378"/>
        <end position="416"/>
    </location>
</feature>
<feature type="region of interest" description="Ubiquitin-like (UBL) domain" evidence="1">
    <location>
        <begin position="10"/>
        <end position="91"/>
    </location>
</feature>
<evidence type="ECO:0000255" key="1">
    <source>
        <dbReference type="HAMAP-Rule" id="MF_03029"/>
    </source>
</evidence>
<comment type="function">
    <text evidence="1">Required for maturation of ribosomal RNAs and formation of the large ribosomal subunit.</text>
</comment>
<comment type="subcellular location">
    <subcellularLocation>
        <location evidence="1">Nucleus</location>
        <location evidence="1">Nucleolus</location>
    </subcellularLocation>
    <subcellularLocation>
        <location evidence="1">Nucleus</location>
        <location evidence="1">Nucleoplasm</location>
    </subcellularLocation>
</comment>
<comment type="similarity">
    <text evidence="1">Belongs to the WD repeat WDR12/YTM1 family.</text>
</comment>
<organism>
    <name type="scientific">Drosophila virilis</name>
    <name type="common">Fruit fly</name>
    <dbReference type="NCBI Taxonomy" id="7244"/>
    <lineage>
        <taxon>Eukaryota</taxon>
        <taxon>Metazoa</taxon>
        <taxon>Ecdysozoa</taxon>
        <taxon>Arthropoda</taxon>
        <taxon>Hexapoda</taxon>
        <taxon>Insecta</taxon>
        <taxon>Pterygota</taxon>
        <taxon>Neoptera</taxon>
        <taxon>Endopterygota</taxon>
        <taxon>Diptera</taxon>
        <taxon>Brachycera</taxon>
        <taxon>Muscomorpha</taxon>
        <taxon>Ephydroidea</taxon>
        <taxon>Drosophilidae</taxon>
        <taxon>Drosophila</taxon>
    </lineage>
</organism>
<reference key="1">
    <citation type="journal article" date="2007" name="Nature">
        <title>Evolution of genes and genomes on the Drosophila phylogeny.</title>
        <authorList>
            <consortium name="Drosophila 12 genomes consortium"/>
        </authorList>
    </citation>
    <scope>NUCLEOTIDE SEQUENCE [LARGE SCALE GENOMIC DNA]</scope>
    <source>
        <strain>Tucson 15010-1051.87</strain>
    </source>
</reference>
<accession>B4LS78</accession>
<name>WDR12_DROVI</name>
<gene>
    <name type="ORF">GJ17641</name>
</gene>